<protein>
    <recommendedName>
        <fullName>Synaptobrevin-like protein 5</fullName>
    </recommendedName>
</protein>
<proteinExistence type="predicted"/>
<dbReference type="EMBL" id="FO080290">
    <property type="protein sequence ID" value="CCD62654.1"/>
    <property type="molecule type" value="Genomic_DNA"/>
</dbReference>
<dbReference type="PIR" id="S44781">
    <property type="entry name" value="S44781"/>
</dbReference>
<dbReference type="RefSeq" id="NP_498790.1">
    <property type="nucleotide sequence ID" value="NM_066389.3"/>
</dbReference>
<dbReference type="SMR" id="P34351"/>
<dbReference type="FunCoup" id="P34351">
    <property type="interactions" value="20"/>
</dbReference>
<dbReference type="STRING" id="6239.C30A5.5.1"/>
<dbReference type="PaxDb" id="6239-C30A5.5"/>
<dbReference type="EnsemblMetazoa" id="C30A5.5.1">
    <property type="protein sequence ID" value="C30A5.5.1"/>
    <property type="gene ID" value="WBGene00004899"/>
</dbReference>
<dbReference type="GeneID" id="191767"/>
<dbReference type="KEGG" id="cel:CELE_C30A5.5"/>
<dbReference type="UCSC" id="C30A5.5">
    <property type="organism name" value="c. elegans"/>
</dbReference>
<dbReference type="AGR" id="WB:WBGene00004899"/>
<dbReference type="CTD" id="191767"/>
<dbReference type="WormBase" id="C30A5.5">
    <property type="protein sequence ID" value="CE00096"/>
    <property type="gene ID" value="WBGene00004899"/>
    <property type="gene designation" value="snb-5"/>
</dbReference>
<dbReference type="eggNOG" id="KOG0860">
    <property type="taxonomic scope" value="Eukaryota"/>
</dbReference>
<dbReference type="GeneTree" id="ENSGT00970000196198"/>
<dbReference type="HOGENOM" id="CLU_2294223_0_0_1"/>
<dbReference type="InParanoid" id="P34351"/>
<dbReference type="OMA" id="EMSWKHK"/>
<dbReference type="OrthoDB" id="10042941at2759"/>
<dbReference type="PhylomeDB" id="P34351"/>
<dbReference type="Reactome" id="R-CEL-181429">
    <property type="pathway name" value="Serotonin Neurotransmitter Release Cycle"/>
</dbReference>
<dbReference type="Reactome" id="R-CEL-181430">
    <property type="pathway name" value="Norepinephrine Neurotransmitter Release Cycle"/>
</dbReference>
<dbReference type="Reactome" id="R-CEL-199992">
    <property type="pathway name" value="trans-Golgi Network Vesicle Budding"/>
</dbReference>
<dbReference type="Reactome" id="R-CEL-210500">
    <property type="pathway name" value="Glutamate Neurotransmitter Release Cycle"/>
</dbReference>
<dbReference type="Reactome" id="R-CEL-212676">
    <property type="pathway name" value="Dopamine Neurotransmitter Release Cycle"/>
</dbReference>
<dbReference type="Reactome" id="R-CEL-264642">
    <property type="pathway name" value="Acetylcholine Neurotransmitter Release Cycle"/>
</dbReference>
<dbReference type="Reactome" id="R-CEL-432720">
    <property type="pathway name" value="Lysosome Vesicle Biogenesis"/>
</dbReference>
<dbReference type="Reactome" id="R-CEL-432722">
    <property type="pathway name" value="Golgi Associated Vesicle Biogenesis"/>
</dbReference>
<dbReference type="Reactome" id="R-CEL-449836">
    <property type="pathway name" value="Other interleukin signaling"/>
</dbReference>
<dbReference type="Reactome" id="R-CEL-6798695">
    <property type="pathway name" value="Neutrophil degranulation"/>
</dbReference>
<dbReference type="Reactome" id="R-CEL-8856825">
    <property type="pathway name" value="Cargo recognition for clathrin-mediated endocytosis"/>
</dbReference>
<dbReference type="Reactome" id="R-CEL-8856828">
    <property type="pathway name" value="Clathrin-mediated endocytosis"/>
</dbReference>
<dbReference type="Reactome" id="R-CEL-888590">
    <property type="pathway name" value="GABA synthesis, release, reuptake and degradation"/>
</dbReference>
<dbReference type="Reactome" id="R-CEL-9609523">
    <property type="pathway name" value="Insertion of tail-anchored proteins into the endoplasmic reticulum membrane"/>
</dbReference>
<dbReference type="PRO" id="PR:P34351"/>
<dbReference type="Proteomes" id="UP000001940">
    <property type="component" value="Chromosome III"/>
</dbReference>
<dbReference type="Bgee" id="WBGene00004899">
    <property type="expression patterns" value="Expressed in adult organism and 2 other cell types or tissues"/>
</dbReference>
<dbReference type="GO" id="GO:0005886">
    <property type="term" value="C:plasma membrane"/>
    <property type="evidence" value="ECO:0000318"/>
    <property type="project" value="GO_Central"/>
</dbReference>
<dbReference type="GO" id="GO:0031201">
    <property type="term" value="C:SNARE complex"/>
    <property type="evidence" value="ECO:0000318"/>
    <property type="project" value="GO_Central"/>
</dbReference>
<dbReference type="GO" id="GO:0005484">
    <property type="term" value="F:SNAP receptor activity"/>
    <property type="evidence" value="ECO:0000318"/>
    <property type="project" value="GO_Central"/>
</dbReference>
<dbReference type="GO" id="GO:0019905">
    <property type="term" value="F:syntaxin binding"/>
    <property type="evidence" value="ECO:0000318"/>
    <property type="project" value="GO_Central"/>
</dbReference>
<dbReference type="GO" id="GO:0006906">
    <property type="term" value="P:vesicle fusion"/>
    <property type="evidence" value="ECO:0000318"/>
    <property type="project" value="GO_Central"/>
</dbReference>
<dbReference type="CDD" id="cd15843">
    <property type="entry name" value="R-SNARE"/>
    <property type="match status" value="1"/>
</dbReference>
<dbReference type="Gene3D" id="1.20.5.110">
    <property type="match status" value="1"/>
</dbReference>
<dbReference type="InterPro" id="IPR001388">
    <property type="entry name" value="Synaptobrevin-like"/>
</dbReference>
<dbReference type="InterPro" id="IPR016444">
    <property type="entry name" value="Synaptobrevin/VAMP"/>
</dbReference>
<dbReference type="InterPro" id="IPR042855">
    <property type="entry name" value="V_SNARE_CC"/>
</dbReference>
<dbReference type="PANTHER" id="PTHR45701">
    <property type="entry name" value="SYNAPTOBREVIN FAMILY MEMBER"/>
    <property type="match status" value="1"/>
</dbReference>
<dbReference type="Pfam" id="PF00957">
    <property type="entry name" value="Synaptobrevin"/>
    <property type="match status" value="1"/>
</dbReference>
<dbReference type="PRINTS" id="PR00219">
    <property type="entry name" value="SYNAPTOBREVN"/>
</dbReference>
<dbReference type="SUPFAM" id="SSF58038">
    <property type="entry name" value="SNARE fusion complex"/>
    <property type="match status" value="1"/>
</dbReference>
<dbReference type="PROSITE" id="PS50892">
    <property type="entry name" value="V_SNARE"/>
    <property type="match status" value="1"/>
</dbReference>
<name>SNB5_CAEEL</name>
<keyword id="KW-0175">Coiled coil</keyword>
<keyword id="KW-1185">Reference proteome</keyword>
<gene>
    <name type="primary">snb-5</name>
    <name type="ORF">C30A5.5</name>
</gene>
<accession>P34351</accession>
<reference key="1">
    <citation type="journal article" date="1994" name="Nature">
        <title>2.2 Mb of contiguous nucleotide sequence from chromosome III of C. elegans.</title>
        <authorList>
            <person name="Wilson R."/>
            <person name="Ainscough R."/>
            <person name="Anderson K."/>
            <person name="Baynes C."/>
            <person name="Berks M."/>
            <person name="Bonfield J."/>
            <person name="Burton J."/>
            <person name="Connell M."/>
            <person name="Copsey T."/>
            <person name="Cooper J."/>
            <person name="Coulson A."/>
            <person name="Craxton M."/>
            <person name="Dear S."/>
            <person name="Du Z."/>
            <person name="Durbin R."/>
            <person name="Favello A."/>
            <person name="Fraser A."/>
            <person name="Fulton L."/>
            <person name="Gardner A."/>
            <person name="Green P."/>
            <person name="Hawkins T."/>
            <person name="Hillier L."/>
            <person name="Jier M."/>
            <person name="Johnston L."/>
            <person name="Jones M."/>
            <person name="Kershaw J."/>
            <person name="Kirsten J."/>
            <person name="Laisster N."/>
            <person name="Latreille P."/>
            <person name="Lightning J."/>
            <person name="Lloyd C."/>
            <person name="Mortimore B."/>
            <person name="O'Callaghan M."/>
            <person name="Parsons J."/>
            <person name="Percy C."/>
            <person name="Rifken L."/>
            <person name="Roopra A."/>
            <person name="Saunders D."/>
            <person name="Shownkeen R."/>
            <person name="Sims M."/>
            <person name="Smaldon N."/>
            <person name="Smith A."/>
            <person name="Smith M."/>
            <person name="Sonnhammer E."/>
            <person name="Staden R."/>
            <person name="Sulston J."/>
            <person name="Thierry-Mieg J."/>
            <person name="Thomas K."/>
            <person name="Vaudin M."/>
            <person name="Vaughan K."/>
            <person name="Waterston R."/>
            <person name="Watson A."/>
            <person name="Weinstock L."/>
            <person name="Wilkinson-Sproat J."/>
            <person name="Wohldman P."/>
        </authorList>
    </citation>
    <scope>NUCLEOTIDE SEQUENCE [LARGE SCALE GENOMIC DNA]</scope>
    <source>
        <strain>Bristol N2</strain>
    </source>
</reference>
<reference key="2">
    <citation type="journal article" date="1998" name="Science">
        <title>Genome sequence of the nematode C. elegans: a platform for investigating biology.</title>
        <authorList>
            <consortium name="The C. elegans sequencing consortium"/>
        </authorList>
    </citation>
    <scope>NUCLEOTIDE SEQUENCE [LARGE SCALE GENOMIC DNA]</scope>
    <source>
        <strain>Bristol N2</strain>
    </source>
</reference>
<feature type="chain" id="PRO_0000206773" description="Synaptobrevin-like protein 5">
    <location>
        <begin position="1"/>
        <end position="102"/>
    </location>
</feature>
<feature type="domain" description="v-SNARE coiled-coil homology" evidence="1">
    <location>
        <begin position="17"/>
        <end position="77"/>
    </location>
</feature>
<evidence type="ECO:0000255" key="1">
    <source>
        <dbReference type="PROSITE-ProRule" id="PRU00290"/>
    </source>
</evidence>
<organism>
    <name type="scientific">Caenorhabditis elegans</name>
    <dbReference type="NCBI Taxonomy" id="6239"/>
    <lineage>
        <taxon>Eukaryota</taxon>
        <taxon>Metazoa</taxon>
        <taxon>Ecdysozoa</taxon>
        <taxon>Nematoda</taxon>
        <taxon>Chromadorea</taxon>
        <taxon>Rhabditida</taxon>
        <taxon>Rhabditina</taxon>
        <taxon>Rhabditomorpha</taxon>
        <taxon>Rhabditoidea</taxon>
        <taxon>Rhabditidae</taxon>
        <taxon>Peloderinae</taxon>
        <taxon>Caenorhabditis</taxon>
    </lineage>
</organism>
<sequence length="102" mass="11728">MNHQPPPVSRIGWDDQKIMRTRRELDSVKAIMKENVQKIMERQGKLDDLVERAQRLEEASDVYVKCAVKIKREMSWKANSLRYGIIAVSSVSAFAGLAYSFL</sequence>